<dbReference type="EMBL" id="AB009019">
    <property type="protein sequence ID" value="BAF80620.1"/>
    <property type="molecule type" value="mRNA"/>
</dbReference>
<dbReference type="EMBL" id="AK002226">
    <property type="protein sequence ID" value="BAB21948.1"/>
    <property type="molecule type" value="mRNA"/>
</dbReference>
<dbReference type="EMBL" id="BC099511">
    <property type="protein sequence ID" value="AAH99511.1"/>
    <property type="molecule type" value="mRNA"/>
</dbReference>
<dbReference type="EMBL" id="BC132407">
    <property type="protein sequence ID" value="AAI32408.1"/>
    <property type="molecule type" value="mRNA"/>
</dbReference>
<dbReference type="EMBL" id="BC132409">
    <property type="protein sequence ID" value="AAI32410.1"/>
    <property type="molecule type" value="mRNA"/>
</dbReference>
<dbReference type="CCDS" id="CCDS27529.1"/>
<dbReference type="RefSeq" id="NP_080947.1">
    <property type="nucleotide sequence ID" value="NM_026671.1"/>
</dbReference>
<dbReference type="RefSeq" id="XP_006521375.1">
    <property type="nucleotide sequence ID" value="XM_006521312.1"/>
</dbReference>
<dbReference type="SMR" id="Q9DD23"/>
<dbReference type="FunCoup" id="Q9DD23">
    <property type="interactions" value="3"/>
</dbReference>
<dbReference type="STRING" id="10090.ENSMUSP00000023260"/>
<dbReference type="GlyCosmos" id="Q9DD23">
    <property type="glycosylation" value="1 site, No reported glycans"/>
</dbReference>
<dbReference type="GlyGen" id="Q9DD23">
    <property type="glycosylation" value="1 site"/>
</dbReference>
<dbReference type="PaxDb" id="10090-ENSMUSP00000023260"/>
<dbReference type="Antibodypedia" id="27786">
    <property type="antibodies" value="34 antibodies from 9 providers"/>
</dbReference>
<dbReference type="Ensembl" id="ENSMUST00000023260.5">
    <property type="protein sequence ID" value="ENSMUSP00000023260.4"/>
    <property type="gene ID" value="ENSMUSG00000022595.8"/>
</dbReference>
<dbReference type="GeneID" id="68311"/>
<dbReference type="KEGG" id="mmu:68311"/>
<dbReference type="UCSC" id="uc007wfu.1">
    <property type="organism name" value="mouse"/>
</dbReference>
<dbReference type="AGR" id="MGI:1915561"/>
<dbReference type="CTD" id="137797"/>
<dbReference type="MGI" id="MGI:1915561">
    <property type="gene designation" value="Lypd2"/>
</dbReference>
<dbReference type="VEuPathDB" id="HostDB:ENSMUSG00000022595"/>
<dbReference type="eggNOG" id="ENOG502SG63">
    <property type="taxonomic scope" value="Eukaryota"/>
</dbReference>
<dbReference type="GeneTree" id="ENSGT00940000162197"/>
<dbReference type="HOGENOM" id="CLU_141358_2_0_1"/>
<dbReference type="InParanoid" id="Q9DD23"/>
<dbReference type="OMA" id="RCYVCPE"/>
<dbReference type="OrthoDB" id="9900838at2759"/>
<dbReference type="PhylomeDB" id="Q9DD23"/>
<dbReference type="TreeFam" id="TF336080"/>
<dbReference type="Reactome" id="R-MMU-163125">
    <property type="pathway name" value="Post-translational modification: synthesis of GPI-anchored proteins"/>
</dbReference>
<dbReference type="BioGRID-ORCS" id="68311">
    <property type="hits" value="2 hits in 76 CRISPR screens"/>
</dbReference>
<dbReference type="PRO" id="PR:Q9DD23"/>
<dbReference type="Proteomes" id="UP000000589">
    <property type="component" value="Chromosome 15"/>
</dbReference>
<dbReference type="RNAct" id="Q9DD23">
    <property type="molecule type" value="protein"/>
</dbReference>
<dbReference type="Bgee" id="ENSMUSG00000022595">
    <property type="expression patterns" value="Expressed in olfactory epithelium and 66 other cell types or tissues"/>
</dbReference>
<dbReference type="GO" id="GO:0005886">
    <property type="term" value="C:plasma membrane"/>
    <property type="evidence" value="ECO:0007669"/>
    <property type="project" value="UniProtKB-SubCell"/>
</dbReference>
<dbReference type="GO" id="GO:0098552">
    <property type="term" value="C:side of membrane"/>
    <property type="evidence" value="ECO:0007669"/>
    <property type="project" value="UniProtKB-KW"/>
</dbReference>
<dbReference type="CDD" id="cd23620">
    <property type="entry name" value="TFP_LU_ECD_LYPD2"/>
    <property type="match status" value="1"/>
</dbReference>
<dbReference type="FunFam" id="2.10.60.10:FF:000003">
    <property type="entry name" value="lymphocyte antigen 6E isoform X1"/>
    <property type="match status" value="1"/>
</dbReference>
<dbReference type="Gene3D" id="2.10.60.10">
    <property type="entry name" value="CD59"/>
    <property type="match status" value="1"/>
</dbReference>
<dbReference type="InterPro" id="IPR051110">
    <property type="entry name" value="Ly-6/neurotoxin-like_GPI-ap"/>
</dbReference>
<dbReference type="InterPro" id="IPR016054">
    <property type="entry name" value="LY6_UPA_recep-like"/>
</dbReference>
<dbReference type="InterPro" id="IPR045860">
    <property type="entry name" value="Snake_toxin-like_sf"/>
</dbReference>
<dbReference type="InterPro" id="IPR035076">
    <property type="entry name" value="Toxin/TOLIP"/>
</dbReference>
<dbReference type="PANTHER" id="PTHR16983">
    <property type="entry name" value="UPAR/LY6 DOMAIN-CONTAINING PROTEIN"/>
    <property type="match status" value="1"/>
</dbReference>
<dbReference type="PANTHER" id="PTHR16983:SF16">
    <property type="entry name" value="UPAR_LY6 DOMAIN-CONTAINING PROTEIN"/>
    <property type="match status" value="1"/>
</dbReference>
<dbReference type="Pfam" id="PF00087">
    <property type="entry name" value="Toxin_TOLIP"/>
    <property type="match status" value="1"/>
</dbReference>
<dbReference type="SMART" id="SM00134">
    <property type="entry name" value="LU"/>
    <property type="match status" value="1"/>
</dbReference>
<dbReference type="SUPFAM" id="SSF57302">
    <property type="entry name" value="Snake toxin-like"/>
    <property type="match status" value="1"/>
</dbReference>
<name>LYPD2_MOUSE</name>
<protein>
    <recommendedName>
        <fullName>Ly6/PLAUR domain-containing protein 2</fullName>
    </recommendedName>
    <alternativeName>
        <fullName>Protein H8C4</fullName>
    </alternativeName>
</protein>
<reference key="1">
    <citation type="submission" date="1997-11" db="EMBL/GenBank/DDBJ databases">
        <title>Molecular cloning of a novel GPI-anchor type protein.</title>
        <authorList>
            <person name="Mori K."/>
            <person name="Ogawa Y."/>
            <person name="Tashiro K."/>
            <person name="Ozaki S."/>
            <person name="Mukoyama M."/>
            <person name="Tanaka I."/>
            <person name="Nakao K."/>
        </authorList>
    </citation>
    <scope>NUCLEOTIDE SEQUENCE [MRNA]</scope>
    <source>
        <strain>BALB/cJ</strain>
        <tissue>Kidney</tissue>
    </source>
</reference>
<reference key="2">
    <citation type="journal article" date="2005" name="Science">
        <title>The transcriptional landscape of the mammalian genome.</title>
        <authorList>
            <person name="Carninci P."/>
            <person name="Kasukawa T."/>
            <person name="Katayama S."/>
            <person name="Gough J."/>
            <person name="Frith M.C."/>
            <person name="Maeda N."/>
            <person name="Oyama R."/>
            <person name="Ravasi T."/>
            <person name="Lenhard B."/>
            <person name="Wells C."/>
            <person name="Kodzius R."/>
            <person name="Shimokawa K."/>
            <person name="Bajic V.B."/>
            <person name="Brenner S.E."/>
            <person name="Batalov S."/>
            <person name="Forrest A.R."/>
            <person name="Zavolan M."/>
            <person name="Davis M.J."/>
            <person name="Wilming L.G."/>
            <person name="Aidinis V."/>
            <person name="Allen J.E."/>
            <person name="Ambesi-Impiombato A."/>
            <person name="Apweiler R."/>
            <person name="Aturaliya R.N."/>
            <person name="Bailey T.L."/>
            <person name="Bansal M."/>
            <person name="Baxter L."/>
            <person name="Beisel K.W."/>
            <person name="Bersano T."/>
            <person name="Bono H."/>
            <person name="Chalk A.M."/>
            <person name="Chiu K.P."/>
            <person name="Choudhary V."/>
            <person name="Christoffels A."/>
            <person name="Clutterbuck D.R."/>
            <person name="Crowe M.L."/>
            <person name="Dalla E."/>
            <person name="Dalrymple B.P."/>
            <person name="de Bono B."/>
            <person name="Della Gatta G."/>
            <person name="di Bernardo D."/>
            <person name="Down T."/>
            <person name="Engstrom P."/>
            <person name="Fagiolini M."/>
            <person name="Faulkner G."/>
            <person name="Fletcher C.F."/>
            <person name="Fukushima T."/>
            <person name="Furuno M."/>
            <person name="Futaki S."/>
            <person name="Gariboldi M."/>
            <person name="Georgii-Hemming P."/>
            <person name="Gingeras T.R."/>
            <person name="Gojobori T."/>
            <person name="Green R.E."/>
            <person name="Gustincich S."/>
            <person name="Harbers M."/>
            <person name="Hayashi Y."/>
            <person name="Hensch T.K."/>
            <person name="Hirokawa N."/>
            <person name="Hill D."/>
            <person name="Huminiecki L."/>
            <person name="Iacono M."/>
            <person name="Ikeo K."/>
            <person name="Iwama A."/>
            <person name="Ishikawa T."/>
            <person name="Jakt M."/>
            <person name="Kanapin A."/>
            <person name="Katoh M."/>
            <person name="Kawasawa Y."/>
            <person name="Kelso J."/>
            <person name="Kitamura H."/>
            <person name="Kitano H."/>
            <person name="Kollias G."/>
            <person name="Krishnan S.P."/>
            <person name="Kruger A."/>
            <person name="Kummerfeld S.K."/>
            <person name="Kurochkin I.V."/>
            <person name="Lareau L.F."/>
            <person name="Lazarevic D."/>
            <person name="Lipovich L."/>
            <person name="Liu J."/>
            <person name="Liuni S."/>
            <person name="McWilliam S."/>
            <person name="Madan Babu M."/>
            <person name="Madera M."/>
            <person name="Marchionni L."/>
            <person name="Matsuda H."/>
            <person name="Matsuzawa S."/>
            <person name="Miki H."/>
            <person name="Mignone F."/>
            <person name="Miyake S."/>
            <person name="Morris K."/>
            <person name="Mottagui-Tabar S."/>
            <person name="Mulder N."/>
            <person name="Nakano N."/>
            <person name="Nakauchi H."/>
            <person name="Ng P."/>
            <person name="Nilsson R."/>
            <person name="Nishiguchi S."/>
            <person name="Nishikawa S."/>
            <person name="Nori F."/>
            <person name="Ohara O."/>
            <person name="Okazaki Y."/>
            <person name="Orlando V."/>
            <person name="Pang K.C."/>
            <person name="Pavan W.J."/>
            <person name="Pavesi G."/>
            <person name="Pesole G."/>
            <person name="Petrovsky N."/>
            <person name="Piazza S."/>
            <person name="Reed J."/>
            <person name="Reid J.F."/>
            <person name="Ring B.Z."/>
            <person name="Ringwald M."/>
            <person name="Rost B."/>
            <person name="Ruan Y."/>
            <person name="Salzberg S.L."/>
            <person name="Sandelin A."/>
            <person name="Schneider C."/>
            <person name="Schoenbach C."/>
            <person name="Sekiguchi K."/>
            <person name="Semple C.A."/>
            <person name="Seno S."/>
            <person name="Sessa L."/>
            <person name="Sheng Y."/>
            <person name="Shibata Y."/>
            <person name="Shimada H."/>
            <person name="Shimada K."/>
            <person name="Silva D."/>
            <person name="Sinclair B."/>
            <person name="Sperling S."/>
            <person name="Stupka E."/>
            <person name="Sugiura K."/>
            <person name="Sultana R."/>
            <person name="Takenaka Y."/>
            <person name="Taki K."/>
            <person name="Tammoja K."/>
            <person name="Tan S.L."/>
            <person name="Tang S."/>
            <person name="Taylor M.S."/>
            <person name="Tegner J."/>
            <person name="Teichmann S.A."/>
            <person name="Ueda H.R."/>
            <person name="van Nimwegen E."/>
            <person name="Verardo R."/>
            <person name="Wei C.L."/>
            <person name="Yagi K."/>
            <person name="Yamanishi H."/>
            <person name="Zabarovsky E."/>
            <person name="Zhu S."/>
            <person name="Zimmer A."/>
            <person name="Hide W."/>
            <person name="Bult C."/>
            <person name="Grimmond S.M."/>
            <person name="Teasdale R.D."/>
            <person name="Liu E.T."/>
            <person name="Brusic V."/>
            <person name="Quackenbush J."/>
            <person name="Wahlestedt C."/>
            <person name="Mattick J.S."/>
            <person name="Hume D.A."/>
            <person name="Kai C."/>
            <person name="Sasaki D."/>
            <person name="Tomaru Y."/>
            <person name="Fukuda S."/>
            <person name="Kanamori-Katayama M."/>
            <person name="Suzuki M."/>
            <person name="Aoki J."/>
            <person name="Arakawa T."/>
            <person name="Iida J."/>
            <person name="Imamura K."/>
            <person name="Itoh M."/>
            <person name="Kato T."/>
            <person name="Kawaji H."/>
            <person name="Kawagashira N."/>
            <person name="Kawashima T."/>
            <person name="Kojima M."/>
            <person name="Kondo S."/>
            <person name="Konno H."/>
            <person name="Nakano K."/>
            <person name="Ninomiya N."/>
            <person name="Nishio T."/>
            <person name="Okada M."/>
            <person name="Plessy C."/>
            <person name="Shibata K."/>
            <person name="Shiraki T."/>
            <person name="Suzuki S."/>
            <person name="Tagami M."/>
            <person name="Waki K."/>
            <person name="Watahiki A."/>
            <person name="Okamura-Oho Y."/>
            <person name="Suzuki H."/>
            <person name="Kawai J."/>
            <person name="Hayashizaki Y."/>
        </authorList>
    </citation>
    <scope>NUCLEOTIDE SEQUENCE [LARGE SCALE MRNA]</scope>
    <source>
        <strain>C57BL/6J</strain>
        <tissue>Kidney</tissue>
    </source>
</reference>
<reference key="3">
    <citation type="journal article" date="2004" name="Genome Res.">
        <title>The status, quality, and expansion of the NIH full-length cDNA project: the Mammalian Gene Collection (MGC).</title>
        <authorList>
            <consortium name="The MGC Project Team"/>
        </authorList>
    </citation>
    <scope>NUCLEOTIDE SEQUENCE [LARGE SCALE MRNA]</scope>
    <source>
        <tissue>Brain</tissue>
        <tissue>Thyroid</tissue>
    </source>
</reference>
<organism>
    <name type="scientific">Mus musculus</name>
    <name type="common">Mouse</name>
    <dbReference type="NCBI Taxonomy" id="10090"/>
    <lineage>
        <taxon>Eukaryota</taxon>
        <taxon>Metazoa</taxon>
        <taxon>Chordata</taxon>
        <taxon>Craniata</taxon>
        <taxon>Vertebrata</taxon>
        <taxon>Euteleostomi</taxon>
        <taxon>Mammalia</taxon>
        <taxon>Eutheria</taxon>
        <taxon>Euarchontoglires</taxon>
        <taxon>Glires</taxon>
        <taxon>Rodentia</taxon>
        <taxon>Myomorpha</taxon>
        <taxon>Muroidea</taxon>
        <taxon>Muridae</taxon>
        <taxon>Murinae</taxon>
        <taxon>Mus</taxon>
        <taxon>Mus</taxon>
    </lineage>
</organism>
<evidence type="ECO:0000255" key="1"/>
<evidence type="ECO:0000305" key="2"/>
<sequence length="127" mass="13280">MQGTWMVLLALILGTFGELAMALQCYTCANPVSASNCVTTTHCHINETMCKTTLYSLEIVFPFLGDSTVTKSCASKCEPSDVDGIGQTRPVSCCNSDLCNVDGAPSLGSPGGLLLALALFLLLGVLL</sequence>
<comment type="subcellular location">
    <subcellularLocation>
        <location evidence="2">Cell membrane</location>
        <topology evidence="2">Lipid-anchor</topology>
        <topology evidence="2">GPI-anchor</topology>
    </subcellularLocation>
</comment>
<keyword id="KW-1003">Cell membrane</keyword>
<keyword id="KW-0325">Glycoprotein</keyword>
<keyword id="KW-0336">GPI-anchor</keyword>
<keyword id="KW-0449">Lipoprotein</keyword>
<keyword id="KW-0472">Membrane</keyword>
<keyword id="KW-1185">Reference proteome</keyword>
<keyword id="KW-0732">Signal</keyword>
<feature type="signal peptide" evidence="1">
    <location>
        <begin position="1"/>
        <end position="22"/>
    </location>
</feature>
<feature type="chain" id="PRO_0000226749" description="Ly6/PLAUR domain-containing protein 2">
    <location>
        <begin position="23"/>
        <end position="106"/>
    </location>
</feature>
<feature type="propeptide" id="PRO_0000226750" description="Removed in mature form" evidence="1">
    <location>
        <begin position="107"/>
        <end position="127"/>
    </location>
</feature>
<feature type="domain" description="UPAR/Ly6">
    <location>
        <begin position="25"/>
        <end position="100"/>
    </location>
</feature>
<feature type="lipid moiety-binding region" description="GPI-anchor amidated serine" evidence="1">
    <location>
        <position position="106"/>
    </location>
</feature>
<feature type="glycosylation site" description="N-linked (GlcNAc...) asparagine" evidence="1">
    <location>
        <position position="46"/>
    </location>
</feature>
<gene>
    <name type="primary">Lypd2</name>
    <name type="synonym">Lypdc2</name>
</gene>
<accession>Q9DD23</accession>
<accession>A2RT83</accession>
<proteinExistence type="evidence at transcript level"/>